<dbReference type="EMBL" id="AE017221">
    <property type="protein sequence ID" value="AAS81373.1"/>
    <property type="molecule type" value="Genomic_DNA"/>
</dbReference>
<dbReference type="RefSeq" id="WP_008632893.1">
    <property type="nucleotide sequence ID" value="NC_005835.1"/>
</dbReference>
<dbReference type="PDB" id="2UXB">
    <property type="method" value="X-ray"/>
    <property type="resolution" value="3.10 A"/>
    <property type="chains" value="T=1-106"/>
</dbReference>
<dbReference type="PDB" id="2UXC">
    <property type="method" value="X-ray"/>
    <property type="resolution" value="2.90 A"/>
    <property type="chains" value="T=1-106"/>
</dbReference>
<dbReference type="PDB" id="2UXD">
    <property type="method" value="X-ray"/>
    <property type="resolution" value="3.20 A"/>
    <property type="chains" value="T=1-106"/>
</dbReference>
<dbReference type="PDB" id="2VQE">
    <property type="method" value="X-ray"/>
    <property type="resolution" value="2.50 A"/>
    <property type="chains" value="T=1-106"/>
</dbReference>
<dbReference type="PDB" id="2VQF">
    <property type="method" value="X-ray"/>
    <property type="resolution" value="2.90 A"/>
    <property type="chains" value="T=1-106"/>
</dbReference>
<dbReference type="PDB" id="3T1H">
    <property type="method" value="X-ray"/>
    <property type="resolution" value="3.11 A"/>
    <property type="chains" value="T=1-106"/>
</dbReference>
<dbReference type="PDB" id="3T1Y">
    <property type="method" value="X-ray"/>
    <property type="resolution" value="2.80 A"/>
    <property type="chains" value="T=1-106"/>
</dbReference>
<dbReference type="PDB" id="4KVB">
    <property type="method" value="X-ray"/>
    <property type="resolution" value="4.20 A"/>
    <property type="chains" value="T=1-106"/>
</dbReference>
<dbReference type="PDB" id="4V4G">
    <property type="method" value="X-ray"/>
    <property type="resolution" value="11.50 A"/>
    <property type="chains" value="T=8-106"/>
</dbReference>
<dbReference type="PDB" id="4V4I">
    <property type="method" value="X-ray"/>
    <property type="resolution" value="3.71 A"/>
    <property type="chains" value="u=1-106"/>
</dbReference>
<dbReference type="PDB" id="4V4J">
    <property type="method" value="X-ray"/>
    <property type="resolution" value="3.83 A"/>
    <property type="chains" value="u=1-106"/>
</dbReference>
<dbReference type="PDB" id="4V63">
    <property type="method" value="X-ray"/>
    <property type="resolution" value="3.21 A"/>
    <property type="chains" value="AT/CT=1-106"/>
</dbReference>
<dbReference type="PDB" id="4V67">
    <property type="method" value="X-ray"/>
    <property type="resolution" value="3.00 A"/>
    <property type="chains" value="AT/CT=1-106"/>
</dbReference>
<dbReference type="PDB" id="4V7P">
    <property type="method" value="X-ray"/>
    <property type="resolution" value="3.62 A"/>
    <property type="chains" value="AT/DT=8-106"/>
</dbReference>
<dbReference type="PDB" id="4V83">
    <property type="method" value="X-ray"/>
    <property type="resolution" value="3.50 A"/>
    <property type="chains" value="AT/CT=8-106"/>
</dbReference>
<dbReference type="PDB" id="4V84">
    <property type="method" value="X-ray"/>
    <property type="resolution" value="3.40 A"/>
    <property type="chains" value="AT/CT=8-106"/>
</dbReference>
<dbReference type="PDB" id="4V9J">
    <property type="method" value="X-ray"/>
    <property type="resolution" value="3.86 A"/>
    <property type="chains" value="AT/CT=8-106"/>
</dbReference>
<dbReference type="PDB" id="4V9K">
    <property type="method" value="X-ray"/>
    <property type="resolution" value="3.50 A"/>
    <property type="chains" value="AT/CT=8-106"/>
</dbReference>
<dbReference type="PDB" id="4V9L">
    <property type="method" value="X-ray"/>
    <property type="resolution" value="3.50 A"/>
    <property type="chains" value="AT/CT=8-106"/>
</dbReference>
<dbReference type="PDB" id="4V9M">
    <property type="method" value="X-ray"/>
    <property type="resolution" value="4.00 A"/>
    <property type="chains" value="AT/CT=8-106"/>
</dbReference>
<dbReference type="PDB" id="4V9N">
    <property type="method" value="X-ray"/>
    <property type="resolution" value="3.40 A"/>
    <property type="chains" value="AT/CT=8-106"/>
</dbReference>
<dbReference type="PDB" id="4V9Q">
    <property type="method" value="X-ray"/>
    <property type="resolution" value="3.40 A"/>
    <property type="chains" value="BT/DT=8-106"/>
</dbReference>
<dbReference type="PDB" id="4W29">
    <property type="method" value="X-ray"/>
    <property type="resolution" value="3.80 A"/>
    <property type="chains" value="AT/CT=8-106"/>
</dbReference>
<dbReference type="PDB" id="4XEJ">
    <property type="method" value="X-ray"/>
    <property type="resolution" value="3.80 A"/>
    <property type="chains" value="AS20/BS20=8-106"/>
</dbReference>
<dbReference type="PDB" id="5J4D">
    <property type="method" value="X-ray"/>
    <property type="resolution" value="3.10 A"/>
    <property type="chains" value="CB/HD=1-106"/>
</dbReference>
<dbReference type="PDB" id="5V8I">
    <property type="method" value="X-ray"/>
    <property type="resolution" value="3.25 A"/>
    <property type="chains" value="1t/2t=1-106"/>
</dbReference>
<dbReference type="PDB" id="6B4V">
    <property type="method" value="X-ray"/>
    <property type="resolution" value="3.40 A"/>
    <property type="chains" value="CB/GD=1-106"/>
</dbReference>
<dbReference type="PDB" id="6BOH">
    <property type="method" value="X-ray"/>
    <property type="resolution" value="3.40 A"/>
    <property type="chains" value="DB/ID=1-106"/>
</dbReference>
<dbReference type="PDB" id="6BOK">
    <property type="method" value="X-ray"/>
    <property type="resolution" value="3.55 A"/>
    <property type="chains" value="BB/ED=1-106"/>
</dbReference>
<dbReference type="PDB" id="6N1D">
    <property type="method" value="X-ray"/>
    <property type="resolution" value="3.20 A"/>
    <property type="chains" value="AS20/BS20=2-106"/>
</dbReference>
<dbReference type="PDBsum" id="2UXB"/>
<dbReference type="PDBsum" id="2UXC"/>
<dbReference type="PDBsum" id="2UXD"/>
<dbReference type="PDBsum" id="2VQE"/>
<dbReference type="PDBsum" id="2VQF"/>
<dbReference type="PDBsum" id="3T1H"/>
<dbReference type="PDBsum" id="3T1Y"/>
<dbReference type="PDBsum" id="4KVB"/>
<dbReference type="PDBsum" id="4V4G"/>
<dbReference type="PDBsum" id="4V4I"/>
<dbReference type="PDBsum" id="4V4J"/>
<dbReference type="PDBsum" id="4V63"/>
<dbReference type="PDBsum" id="4V67"/>
<dbReference type="PDBsum" id="4V7P"/>
<dbReference type="PDBsum" id="4V83"/>
<dbReference type="PDBsum" id="4V84"/>
<dbReference type="PDBsum" id="4V9J"/>
<dbReference type="PDBsum" id="4V9K"/>
<dbReference type="PDBsum" id="4V9L"/>
<dbReference type="PDBsum" id="4V9M"/>
<dbReference type="PDBsum" id="4V9N"/>
<dbReference type="PDBsum" id="4V9Q"/>
<dbReference type="PDBsum" id="4W29"/>
<dbReference type="PDBsum" id="4XEJ"/>
<dbReference type="PDBsum" id="5J4D"/>
<dbReference type="PDBsum" id="5V8I"/>
<dbReference type="PDBsum" id="6B4V"/>
<dbReference type="PDBsum" id="6BOH"/>
<dbReference type="PDBsum" id="6BOK"/>
<dbReference type="PDBsum" id="6N1D"/>
<dbReference type="SMR" id="P62661"/>
<dbReference type="IntAct" id="P62661">
    <property type="interactions" value="4"/>
</dbReference>
<dbReference type="DrugBank" id="DB08185">
    <property type="generic name" value="2-METHYLTHIO-N6-ISOPENTENYL-ADENOSINE-5'-MONOPHOSPHATE"/>
</dbReference>
<dbReference type="KEGG" id="tth:TT_C1031"/>
<dbReference type="eggNOG" id="COG0268">
    <property type="taxonomic scope" value="Bacteria"/>
</dbReference>
<dbReference type="HOGENOM" id="CLU_160655_3_1_0"/>
<dbReference type="OrthoDB" id="9807974at2"/>
<dbReference type="EvolutionaryTrace" id="P62661"/>
<dbReference type="Proteomes" id="UP000000592">
    <property type="component" value="Chromosome"/>
</dbReference>
<dbReference type="GO" id="GO:0015935">
    <property type="term" value="C:small ribosomal subunit"/>
    <property type="evidence" value="ECO:0007669"/>
    <property type="project" value="TreeGrafter"/>
</dbReference>
<dbReference type="GO" id="GO:0070181">
    <property type="term" value="F:small ribosomal subunit rRNA binding"/>
    <property type="evidence" value="ECO:0007669"/>
    <property type="project" value="TreeGrafter"/>
</dbReference>
<dbReference type="GO" id="GO:0003735">
    <property type="term" value="F:structural constituent of ribosome"/>
    <property type="evidence" value="ECO:0007669"/>
    <property type="project" value="InterPro"/>
</dbReference>
<dbReference type="GO" id="GO:0006412">
    <property type="term" value="P:translation"/>
    <property type="evidence" value="ECO:0007669"/>
    <property type="project" value="UniProtKB-UniRule"/>
</dbReference>
<dbReference type="Gene3D" id="1.20.58.110">
    <property type="entry name" value="Ribosomal protein S20"/>
    <property type="match status" value="1"/>
</dbReference>
<dbReference type="HAMAP" id="MF_00500">
    <property type="entry name" value="Ribosomal_bS20"/>
    <property type="match status" value="1"/>
</dbReference>
<dbReference type="InterPro" id="IPR002583">
    <property type="entry name" value="Ribosomal_bS20"/>
</dbReference>
<dbReference type="InterPro" id="IPR036510">
    <property type="entry name" value="Ribosomal_bS20_sf"/>
</dbReference>
<dbReference type="NCBIfam" id="TIGR00029">
    <property type="entry name" value="S20"/>
    <property type="match status" value="1"/>
</dbReference>
<dbReference type="PANTHER" id="PTHR33398">
    <property type="entry name" value="30S RIBOSOMAL PROTEIN S20"/>
    <property type="match status" value="1"/>
</dbReference>
<dbReference type="PANTHER" id="PTHR33398:SF1">
    <property type="entry name" value="SMALL RIBOSOMAL SUBUNIT PROTEIN BS20C"/>
    <property type="match status" value="1"/>
</dbReference>
<dbReference type="Pfam" id="PF01649">
    <property type="entry name" value="Ribosomal_S20p"/>
    <property type="match status" value="1"/>
</dbReference>
<dbReference type="SUPFAM" id="SSF46992">
    <property type="entry name" value="Ribosomal protein S20"/>
    <property type="match status" value="1"/>
</dbReference>
<comment type="function">
    <text evidence="1">Binds directly to 16S ribosomal RNA.</text>
</comment>
<comment type="similarity">
    <text evidence="3">Belongs to the bacterial ribosomal protein bS20 family.</text>
</comment>
<gene>
    <name type="primary">rpsT</name>
    <name type="synonym">rps20</name>
    <name type="ordered locus">TT_C1031</name>
</gene>
<organism>
    <name type="scientific">Thermus thermophilus (strain ATCC BAA-163 / DSM 7039 / HB27)</name>
    <dbReference type="NCBI Taxonomy" id="262724"/>
    <lineage>
        <taxon>Bacteria</taxon>
        <taxon>Thermotogati</taxon>
        <taxon>Deinococcota</taxon>
        <taxon>Deinococci</taxon>
        <taxon>Thermales</taxon>
        <taxon>Thermaceae</taxon>
        <taxon>Thermus</taxon>
    </lineage>
</organism>
<sequence length="106" mass="11689">MAQKKPKRNLSALKRHRQSLKRRLRNKAKKSAIKTLSKKAVQLAQEGKAEEALKIMRKAESLIDKAAKGSTLHKNAAARRKSRLMRKVRQLLEAAGAPLIGGGLSA</sequence>
<evidence type="ECO:0000250" key="1"/>
<evidence type="ECO:0000256" key="2">
    <source>
        <dbReference type="SAM" id="MobiDB-lite"/>
    </source>
</evidence>
<evidence type="ECO:0000305" key="3"/>
<evidence type="ECO:0007829" key="4">
    <source>
        <dbReference type="PDB" id="3T1H"/>
    </source>
</evidence>
<evidence type="ECO:0007829" key="5">
    <source>
        <dbReference type="PDB" id="3T1Y"/>
    </source>
</evidence>
<reference key="1">
    <citation type="journal article" date="2004" name="Nat. Biotechnol.">
        <title>The genome sequence of the extreme thermophile Thermus thermophilus.</title>
        <authorList>
            <person name="Henne A."/>
            <person name="Brueggemann H."/>
            <person name="Raasch C."/>
            <person name="Wiezer A."/>
            <person name="Hartsch T."/>
            <person name="Liesegang H."/>
            <person name="Johann A."/>
            <person name="Lienard T."/>
            <person name="Gohl O."/>
            <person name="Martinez-Arias R."/>
            <person name="Jacobi C."/>
            <person name="Starkuviene V."/>
            <person name="Schlenczeck S."/>
            <person name="Dencker S."/>
            <person name="Huber R."/>
            <person name="Klenk H.-P."/>
            <person name="Kramer W."/>
            <person name="Merkl R."/>
            <person name="Gottschalk G."/>
            <person name="Fritz H.-J."/>
        </authorList>
    </citation>
    <scope>NUCLEOTIDE SEQUENCE [LARGE SCALE GENOMIC DNA]</scope>
    <source>
        <strain>ATCC BAA-163 / DSM 7039 / HB27</strain>
    </source>
</reference>
<accession>P62661</accession>
<name>RS20_THET2</name>
<feature type="initiator methionine" description="Removed" evidence="1">
    <location>
        <position position="1"/>
    </location>
</feature>
<feature type="chain" id="PRO_0000168049" description="Small ribosomal subunit protein bS20">
    <location>
        <begin position="2"/>
        <end position="106"/>
    </location>
</feature>
<feature type="region of interest" description="Disordered" evidence="2">
    <location>
        <begin position="1"/>
        <end position="33"/>
    </location>
</feature>
<feature type="compositionally biased region" description="Basic residues" evidence="2">
    <location>
        <begin position="1"/>
        <end position="32"/>
    </location>
</feature>
<feature type="helix" evidence="5">
    <location>
        <begin position="13"/>
        <end position="45"/>
    </location>
</feature>
<feature type="helix" evidence="5">
    <location>
        <begin position="49"/>
        <end position="66"/>
    </location>
</feature>
<feature type="turn" evidence="5">
    <location>
        <begin position="67"/>
        <end position="70"/>
    </location>
</feature>
<feature type="helix" evidence="5">
    <location>
        <begin position="74"/>
        <end position="91"/>
    </location>
</feature>
<feature type="turn" evidence="4">
    <location>
        <begin position="93"/>
        <end position="95"/>
    </location>
</feature>
<proteinExistence type="evidence at protein level"/>
<protein>
    <recommendedName>
        <fullName evidence="3">Small ribosomal subunit protein bS20</fullName>
    </recommendedName>
    <alternativeName>
        <fullName>30S ribosomal protein S20</fullName>
    </alternativeName>
</protein>
<keyword id="KW-0002">3D-structure</keyword>
<keyword id="KW-0687">Ribonucleoprotein</keyword>
<keyword id="KW-0689">Ribosomal protein</keyword>
<keyword id="KW-0694">RNA-binding</keyword>
<keyword id="KW-0699">rRNA-binding</keyword>